<dbReference type="EC" id="1.13.11.24"/>
<dbReference type="PDB" id="1GQG">
    <property type="method" value="X-ray"/>
    <property type="resolution" value="1.70 A"/>
    <property type="chains" value="A/B/C/D=1-350"/>
</dbReference>
<dbReference type="PDB" id="1GQH">
    <property type="method" value="X-ray"/>
    <property type="resolution" value="2.15 A"/>
    <property type="chains" value="A/B/C/D=1-350"/>
</dbReference>
<dbReference type="PDB" id="1H1I">
    <property type="method" value="X-ray"/>
    <property type="resolution" value="1.75 A"/>
    <property type="chains" value="A/B/C/D=1-350"/>
</dbReference>
<dbReference type="PDB" id="1H1M">
    <property type="method" value="X-ray"/>
    <property type="resolution" value="1.90 A"/>
    <property type="chains" value="A/B/C/D=1-350"/>
</dbReference>
<dbReference type="PDB" id="1JUH">
    <property type="method" value="X-ray"/>
    <property type="resolution" value="1.60 A"/>
    <property type="chains" value="A/B/C/D=1-350"/>
</dbReference>
<dbReference type="PDBsum" id="1GQG"/>
<dbReference type="PDBsum" id="1GQH"/>
<dbReference type="PDBsum" id="1H1I"/>
<dbReference type="PDBsum" id="1H1M"/>
<dbReference type="PDBsum" id="1JUH"/>
<dbReference type="SMR" id="Q7SIC2"/>
<dbReference type="BioCyc" id="MetaCyc:MONOMER-16751"/>
<dbReference type="BRENDA" id="1.13.11.24">
    <property type="organism ID" value="513"/>
</dbReference>
<dbReference type="UniPathway" id="UPA00724"/>
<dbReference type="EvolutionaryTrace" id="Q7SIC2"/>
<dbReference type="GO" id="GO:0046872">
    <property type="term" value="F:metal ion binding"/>
    <property type="evidence" value="ECO:0007669"/>
    <property type="project" value="UniProtKB-KW"/>
</dbReference>
<dbReference type="GO" id="GO:0008127">
    <property type="term" value="F:quercetin 2,3-dioxygenase activity"/>
    <property type="evidence" value="ECO:0007669"/>
    <property type="project" value="UniProtKB-EC"/>
</dbReference>
<dbReference type="CDD" id="cd20281">
    <property type="entry name" value="cupin_QDO_C"/>
    <property type="match status" value="1"/>
</dbReference>
<dbReference type="CDD" id="cd02215">
    <property type="entry name" value="cupin_QDO_N_C"/>
    <property type="match status" value="1"/>
</dbReference>
<dbReference type="Gene3D" id="2.60.120.10">
    <property type="entry name" value="Jelly Rolls"/>
    <property type="match status" value="2"/>
</dbReference>
<dbReference type="InterPro" id="IPR052538">
    <property type="entry name" value="Flavonoid_dioxygenase-like"/>
</dbReference>
<dbReference type="InterPro" id="IPR014710">
    <property type="entry name" value="RmlC-like_jellyroll"/>
</dbReference>
<dbReference type="InterPro" id="IPR011051">
    <property type="entry name" value="RmlC_Cupin_sf"/>
</dbReference>
<dbReference type="PANTHER" id="PTHR43346">
    <property type="entry name" value="LIGAND BINDING DOMAIN PROTEIN, PUTATIVE (AFU_ORTHOLOGUE AFUA_6G14370)-RELATED"/>
    <property type="match status" value="1"/>
</dbReference>
<dbReference type="PANTHER" id="PTHR43346:SF1">
    <property type="entry name" value="QUERCETIN 2,3-DIOXYGENASE-RELATED"/>
    <property type="match status" value="1"/>
</dbReference>
<dbReference type="SUPFAM" id="SSF51182">
    <property type="entry name" value="RmlC-like cupins"/>
    <property type="match status" value="1"/>
</dbReference>
<proteinExistence type="evidence at protein level"/>
<reference key="1">
    <citation type="journal article" date="2002" name="Biochemistry">
        <title>Functional analysis of the copper-dependent quercetin 2,3-dioxygenase. 1. Ligand-induced coordination changes probed by X-ray crystallography: inhibition, ordering effect, and mechanistic insights.</title>
        <authorList>
            <person name="Steiner R.A."/>
            <person name="Kooter I.M."/>
            <person name="Dijkstra B.W."/>
        </authorList>
    </citation>
    <scope>X-RAY CRYSTALLOGRAPHY (1.7 ANGSTROMS) IN COMPLEX WITH DIETHYLDITHIOCARBAMATE AND KOJIC ACID</scope>
</reference>
<reference key="2">
    <citation type="journal article" date="2002" name="Proc. Natl. Acad. Sci. U.S.A.">
        <title>Anaerobic enzyme.substrate structures provide insight into the reaction mechanism of the copper-dependent quercetin 2,3-dioxygenase.</title>
        <authorList>
            <person name="Steiner R.A."/>
            <person name="Kalk K.H."/>
            <person name="Dijkstra B.W."/>
        </authorList>
    </citation>
    <scope>X-RAY CRYSTALLOGRAPHY (1.75 ANGSTROMS) IN COMPLEX WITH KAEMPFEROL AND QUERCETIN</scope>
</reference>
<reference key="3">
    <citation type="journal article" date="2002" name="Structure">
        <title>Crystal structure of the copper-containing quercetin 2,3-dioxygenase from Aspergillus japonicus.</title>
        <authorList>
            <person name="Fusetti F."/>
            <person name="Schroeter K.H."/>
            <person name="Steiner R.A."/>
            <person name="van Noort P.I."/>
            <person name="Pijning T."/>
            <person name="Rozeboom H.J."/>
            <person name="Kalk K.H."/>
            <person name="Egmond M.R."/>
            <person name="Dijkstra B.W."/>
        </authorList>
    </citation>
    <scope>X-RAY CRYSTALLOGRAPHY (1.6 ANGSTROMS)</scope>
    <scope>MUTAGENESIS OF GLU-73</scope>
</reference>
<protein>
    <recommendedName>
        <fullName>Quercetin 2,3-dioxygenase</fullName>
        <ecNumber>1.13.11.24</ecNumber>
    </recommendedName>
    <alternativeName>
        <fullName>2,3QD</fullName>
    </alternativeName>
    <alternativeName>
        <fullName>Flavonol 2,4-dioxygenase</fullName>
    </alternativeName>
    <alternativeName>
        <fullName>Quercetinase</fullName>
    </alternativeName>
</protein>
<evidence type="ECO:0000256" key="1">
    <source>
        <dbReference type="SAM" id="MobiDB-lite"/>
    </source>
</evidence>
<evidence type="ECO:0000269" key="2">
    <source>
    </source>
</evidence>
<evidence type="ECO:0000269" key="3">
    <source>
    </source>
</evidence>
<evidence type="ECO:0000269" key="4">
    <source>
    </source>
</evidence>
<evidence type="ECO:0007829" key="5">
    <source>
        <dbReference type="PDB" id="1GQG"/>
    </source>
</evidence>
<evidence type="ECO:0007829" key="6">
    <source>
        <dbReference type="PDB" id="1GQH"/>
    </source>
</evidence>
<evidence type="ECO:0007829" key="7">
    <source>
        <dbReference type="PDB" id="1H1I"/>
    </source>
</evidence>
<evidence type="ECO:0007829" key="8">
    <source>
        <dbReference type="PDB" id="1JUH"/>
    </source>
</evidence>
<name>QDOI_ASPJA</name>
<accession>Q7SIC2</accession>
<accession>Q7SIE5</accession>
<accession>Q7SIE7</accession>
<sequence length="350" mass="37935">DTSSLIVEDAPDHVRPYVIRHYSHARAVTVDTQLYRFYVTGPSSGYAFTLMGTNAPHSDALGVLPHIHQKHYENFYCNKGSFQLWAQSGNETQQTRVLSSGDYGSVPRNVTHTFQIQDPDTEMTGVIVPGGFEDLFYYLGTNATDTTHTPYIPSSSDSSSTTGPDSSTISTLQSFDVYAELSFTPRTDTVNGTAPANTVWHTGANALASTAGDPYFIANGWGPKYLNSQYGYQIVAPFVTATQAQDTNYTLSTISMSTTPSTVTVPTWSFPGACAFQVQEGRVVVQIGDYAATELGSGDVAFIPGGVEFKYYSEAYFSKVLFVSSGSDGLDQNLVNGGEEWSSVSFPADW</sequence>
<feature type="chain" id="PRO_0000097134" description="Quercetin 2,3-dioxygenase">
    <location>
        <begin position="1"/>
        <end position="350"/>
    </location>
</feature>
<feature type="region of interest" description="Cupin 1">
    <location>
        <begin position="1"/>
        <end position="145"/>
    </location>
</feature>
<feature type="region of interest" description="Linker">
    <location>
        <begin position="146"/>
        <end position="205"/>
    </location>
</feature>
<feature type="region of interest" description="Disordered" evidence="1">
    <location>
        <begin position="148"/>
        <end position="167"/>
    </location>
</feature>
<feature type="region of interest" description="Cupin 2">
    <location>
        <begin position="206"/>
        <end position="350"/>
    </location>
</feature>
<feature type="compositionally biased region" description="Low complexity" evidence="1">
    <location>
        <begin position="152"/>
        <end position="167"/>
    </location>
</feature>
<feature type="binding site">
    <location>
        <position position="66"/>
    </location>
    <ligand>
        <name>Cu cation</name>
        <dbReference type="ChEBI" id="CHEBI:23378"/>
    </ligand>
</feature>
<feature type="binding site">
    <location>
        <position position="66"/>
    </location>
    <ligand>
        <name>substrate</name>
    </ligand>
</feature>
<feature type="binding site">
    <location>
        <position position="68"/>
    </location>
    <ligand>
        <name>Cu cation</name>
        <dbReference type="ChEBI" id="CHEBI:23378"/>
    </ligand>
</feature>
<feature type="binding site">
    <location>
        <position position="73"/>
    </location>
    <ligand>
        <name>Cu cation</name>
        <dbReference type="ChEBI" id="CHEBI:23378"/>
    </ligand>
</feature>
<feature type="binding site">
    <location>
        <position position="73"/>
    </location>
    <ligand>
        <name>substrate</name>
    </ligand>
</feature>
<feature type="binding site">
    <location>
        <position position="112"/>
    </location>
    <ligand>
        <name>Cu cation</name>
        <dbReference type="ChEBI" id="CHEBI:23378"/>
    </ligand>
</feature>
<feature type="glycosylation site" description="N-linked (GlcNAc...) asparagine">
    <location>
        <position position="90"/>
    </location>
</feature>
<feature type="glycosylation site" description="N-linked (GlcNAc...) asparagine">
    <location>
        <position position="109"/>
    </location>
</feature>
<feature type="glycosylation site" description="N-linked (GlcNAc...) asparagine">
    <location>
        <position position="142"/>
    </location>
</feature>
<feature type="glycosylation site" description="N-linked (GlcNAc...) asparagine">
    <location>
        <position position="191"/>
    </location>
</feature>
<feature type="glycosylation site" description="N-linked (GlcNAc...) asparagine">
    <location>
        <position position="248"/>
    </location>
</feature>
<feature type="mutagenesis site" description="1000-fold decrease in activity." evidence="2">
    <original>E</original>
    <variation>Q</variation>
    <location>
        <position position="73"/>
    </location>
</feature>
<feature type="strand" evidence="5">
    <location>
        <begin position="5"/>
        <end position="9"/>
    </location>
</feature>
<feature type="strand" evidence="8">
    <location>
        <begin position="17"/>
        <end position="19"/>
    </location>
</feature>
<feature type="strand" evidence="8">
    <location>
        <begin position="28"/>
        <end position="30"/>
    </location>
</feature>
<feature type="strand" evidence="8">
    <location>
        <begin position="33"/>
        <end position="39"/>
    </location>
</feature>
<feature type="helix" evidence="8">
    <location>
        <begin position="41"/>
        <end position="44"/>
    </location>
</feature>
<feature type="strand" evidence="8">
    <location>
        <begin position="49"/>
        <end position="55"/>
    </location>
</feature>
<feature type="strand" evidence="8">
    <location>
        <begin position="72"/>
        <end position="87"/>
    </location>
</feature>
<feature type="strand" evidence="8">
    <location>
        <begin position="94"/>
        <end position="99"/>
    </location>
</feature>
<feature type="strand" evidence="8">
    <location>
        <begin position="103"/>
        <end position="106"/>
    </location>
</feature>
<feature type="strand" evidence="8">
    <location>
        <begin position="111"/>
        <end position="116"/>
    </location>
</feature>
<feature type="strand" evidence="8">
    <location>
        <begin position="121"/>
        <end position="130"/>
    </location>
</feature>
<feature type="helix" evidence="8">
    <location>
        <begin position="134"/>
        <end position="139"/>
    </location>
</feature>
<feature type="strand" evidence="8">
    <location>
        <begin position="140"/>
        <end position="142"/>
    </location>
</feature>
<feature type="strand" evidence="7">
    <location>
        <begin position="162"/>
        <end position="164"/>
    </location>
</feature>
<feature type="helix" evidence="7">
    <location>
        <begin position="166"/>
        <end position="169"/>
    </location>
</feature>
<feature type="helix" evidence="8">
    <location>
        <begin position="170"/>
        <end position="175"/>
    </location>
</feature>
<feature type="strand" evidence="8">
    <location>
        <begin position="193"/>
        <end position="198"/>
    </location>
</feature>
<feature type="strand" evidence="8">
    <location>
        <begin position="200"/>
        <end position="203"/>
    </location>
</feature>
<feature type="strand" evidence="8">
    <location>
        <begin position="215"/>
        <end position="217"/>
    </location>
</feature>
<feature type="turn" evidence="6">
    <location>
        <begin position="219"/>
        <end position="221"/>
    </location>
</feature>
<feature type="strand" evidence="8">
    <location>
        <begin position="224"/>
        <end position="227"/>
    </location>
</feature>
<feature type="strand" evidence="8">
    <location>
        <begin position="233"/>
        <end position="239"/>
    </location>
</feature>
<feature type="helix" evidence="8">
    <location>
        <begin position="241"/>
        <end position="244"/>
    </location>
</feature>
<feature type="helix" evidence="8">
    <location>
        <begin position="245"/>
        <end position="247"/>
    </location>
</feature>
<feature type="strand" evidence="8">
    <location>
        <begin position="249"/>
        <end position="256"/>
    </location>
</feature>
<feature type="strand" evidence="8">
    <location>
        <begin position="274"/>
        <end position="281"/>
    </location>
</feature>
<feature type="strand" evidence="8">
    <location>
        <begin position="283"/>
        <end position="287"/>
    </location>
</feature>
<feature type="strand" evidence="8">
    <location>
        <begin position="293"/>
        <end position="295"/>
    </location>
</feature>
<feature type="strand" evidence="8">
    <location>
        <begin position="300"/>
        <end position="303"/>
    </location>
</feature>
<feature type="strand" evidence="8">
    <location>
        <begin position="309"/>
        <end position="329"/>
    </location>
</feature>
<feature type="helix" evidence="8">
    <location>
        <begin position="330"/>
        <end position="337"/>
    </location>
</feature>
<feature type="strand" evidence="8">
    <location>
        <begin position="338"/>
        <end position="341"/>
    </location>
</feature>
<keyword id="KW-0002">3D-structure</keyword>
<keyword id="KW-0186">Copper</keyword>
<keyword id="KW-0223">Dioxygenase</keyword>
<keyword id="KW-0325">Glycoprotein</keyword>
<keyword id="KW-0479">Metal-binding</keyword>
<keyword id="KW-0560">Oxidoreductase</keyword>
<keyword id="KW-0677">Repeat</keyword>
<organism>
    <name type="scientific">Aspergillus japonicus</name>
    <dbReference type="NCBI Taxonomy" id="34381"/>
    <lineage>
        <taxon>Eukaryota</taxon>
        <taxon>Fungi</taxon>
        <taxon>Dikarya</taxon>
        <taxon>Ascomycota</taxon>
        <taxon>Pezizomycotina</taxon>
        <taxon>Eurotiomycetes</taxon>
        <taxon>Eurotiomycetidae</taxon>
        <taxon>Eurotiales</taxon>
        <taxon>Aspergillaceae</taxon>
        <taxon>Aspergillus</taxon>
        <taxon>Aspergillus subgen. Circumdati</taxon>
    </lineage>
</organism>
<comment type="function">
    <text>Performs the first step in the degradation of the flavonoid quercetin by a dioxygenase reaction. The enzyme catalyzes the cleavage of the O-heteroaromatic ring of the flavonol quercetin yielding the depside 2-protocatechuoyl-phloroglucinol carboxylic acid and carbon monoxide. This involves the remarkable dioxygenolytic cleavage of two carbon-carbon bonds.</text>
</comment>
<comment type="catalytic activity">
    <reaction>
        <text>quercetin + O2 = 2-(3,4-dihydroxybenzoyloxy)-4,6-dihydroxybenzoate + CO</text>
        <dbReference type="Rhea" id="RHEA:15381"/>
        <dbReference type="ChEBI" id="CHEBI:15379"/>
        <dbReference type="ChEBI" id="CHEBI:17245"/>
        <dbReference type="ChEBI" id="CHEBI:57628"/>
        <dbReference type="ChEBI" id="CHEBI:57694"/>
        <dbReference type="EC" id="1.13.11.24"/>
    </reaction>
</comment>
<comment type="cofactor">
    <cofactor>
        <name>Cu cation</name>
        <dbReference type="ChEBI" id="CHEBI:23378"/>
    </cofactor>
    <text>Binds 1 copper ion per subunit.</text>
</comment>
<comment type="activity regulation">
    <text>Inhibited by diethyldithiocarbamate and kojic acid.</text>
</comment>
<comment type="pathway">
    <text>Flavonoid metabolism; quercetin degradation.</text>
</comment>
<comment type="subunit">
    <text evidence="3 4">Homodimer.</text>
</comment>
<comment type="PTM">
    <text>The N-linked glycan at Asn-191 consists of Man(5)-GlcNAc(2).</text>
</comment>